<protein>
    <recommendedName>
        <fullName evidence="1">Protein translocase subunit SecY</fullName>
    </recommendedName>
</protein>
<proteinExistence type="inferred from homology"/>
<dbReference type="EMBL" id="U77912">
    <property type="protein sequence ID" value="AAD09878.1"/>
    <property type="molecule type" value="Genomic_DNA"/>
</dbReference>
<dbReference type="EMBL" id="LT708304">
    <property type="protein sequence ID" value="SIT99352.1"/>
    <property type="molecule type" value="Genomic_DNA"/>
</dbReference>
<dbReference type="RefSeq" id="NP_854411.1">
    <property type="nucleotide sequence ID" value="NC_002945.3"/>
</dbReference>
<dbReference type="RefSeq" id="WP_003403723.1">
    <property type="nucleotide sequence ID" value="NC_002945.4"/>
</dbReference>
<dbReference type="SMR" id="P0A5Z3"/>
<dbReference type="GeneID" id="45424697"/>
<dbReference type="KEGG" id="mbo:BQ2027_MB0753"/>
<dbReference type="PATRIC" id="fig|233413.5.peg.820"/>
<dbReference type="Proteomes" id="UP000001419">
    <property type="component" value="Chromosome"/>
</dbReference>
<dbReference type="GO" id="GO:0005886">
    <property type="term" value="C:plasma membrane"/>
    <property type="evidence" value="ECO:0007669"/>
    <property type="project" value="UniProtKB-SubCell"/>
</dbReference>
<dbReference type="GO" id="GO:0065002">
    <property type="term" value="P:intracellular protein transmembrane transport"/>
    <property type="evidence" value="ECO:0007669"/>
    <property type="project" value="UniProtKB-UniRule"/>
</dbReference>
<dbReference type="GO" id="GO:0006605">
    <property type="term" value="P:protein targeting"/>
    <property type="evidence" value="ECO:0007669"/>
    <property type="project" value="UniProtKB-UniRule"/>
</dbReference>
<dbReference type="GO" id="GO:0043952">
    <property type="term" value="P:protein transport by the Sec complex"/>
    <property type="evidence" value="ECO:0007669"/>
    <property type="project" value="UniProtKB-UniRule"/>
</dbReference>
<dbReference type="FunFam" id="1.10.3370.10:FF:000001">
    <property type="entry name" value="Preprotein translocase subunit SecY"/>
    <property type="match status" value="1"/>
</dbReference>
<dbReference type="Gene3D" id="1.10.3370.10">
    <property type="entry name" value="SecY subunit domain"/>
    <property type="match status" value="1"/>
</dbReference>
<dbReference type="HAMAP" id="MF_01465">
    <property type="entry name" value="SecY"/>
    <property type="match status" value="1"/>
</dbReference>
<dbReference type="InterPro" id="IPR026593">
    <property type="entry name" value="SecY"/>
</dbReference>
<dbReference type="InterPro" id="IPR002208">
    <property type="entry name" value="SecY/SEC61-alpha"/>
</dbReference>
<dbReference type="InterPro" id="IPR030659">
    <property type="entry name" value="SecY_CS"/>
</dbReference>
<dbReference type="InterPro" id="IPR023201">
    <property type="entry name" value="SecY_dom_sf"/>
</dbReference>
<dbReference type="NCBIfam" id="TIGR00967">
    <property type="entry name" value="3a0501s007"/>
    <property type="match status" value="1"/>
</dbReference>
<dbReference type="PANTHER" id="PTHR10906">
    <property type="entry name" value="SECY/SEC61-ALPHA FAMILY MEMBER"/>
    <property type="match status" value="1"/>
</dbReference>
<dbReference type="Pfam" id="PF00344">
    <property type="entry name" value="SecY"/>
    <property type="match status" value="1"/>
</dbReference>
<dbReference type="PIRSF" id="PIRSF004557">
    <property type="entry name" value="SecY"/>
    <property type="match status" value="1"/>
</dbReference>
<dbReference type="PRINTS" id="PR00303">
    <property type="entry name" value="SECYTRNLCASE"/>
</dbReference>
<dbReference type="SUPFAM" id="SSF103491">
    <property type="entry name" value="Preprotein translocase SecY subunit"/>
    <property type="match status" value="1"/>
</dbReference>
<dbReference type="PROSITE" id="PS00755">
    <property type="entry name" value="SECY_1"/>
    <property type="match status" value="1"/>
</dbReference>
<dbReference type="PROSITE" id="PS00756">
    <property type="entry name" value="SECY_2"/>
    <property type="match status" value="1"/>
</dbReference>
<sequence>MLSAFISSLRTVDLRRKILFTLGIVILYRVGAALPSPGVNFPNVQQCIKEASAGEAGQIYSLINLFSGGALLKLTVFAVGVMPYITASIIVQLLTVVIPRFEELRKEGQAGQSKMTQYTRYLAIALAILQATSIVALAANGGLLQGCSLDIIADQSIFTLVVIVLVMTGGAALVMWMGELITERGIGNGMSLLIFVGIAARIPAEGQSILESRGGVVFTAVCAAALIIIVGVVFVEQGQRRIPVQYAKRMVGRRMYGGTSTYLPLKVNQAGVIPVIFASSLIYIPHLITQLIRSGSGVVGNSWWDKFVGTYLSDPSNLVYIGIYFGLIIFFTYFYVSITFNPDERADEMKKFGGFIPGIRPGRPTADYLRYVLSRITLPGSIYLGVIAVLPNLFLQIGAGGTVQNLPFGGTAVLIMIGVGLDTVKQIESQLMQRNYEGFLK</sequence>
<organism>
    <name type="scientific">Mycobacterium bovis (strain ATCC BAA-935 / AF2122/97)</name>
    <dbReference type="NCBI Taxonomy" id="233413"/>
    <lineage>
        <taxon>Bacteria</taxon>
        <taxon>Bacillati</taxon>
        <taxon>Actinomycetota</taxon>
        <taxon>Actinomycetes</taxon>
        <taxon>Mycobacteriales</taxon>
        <taxon>Mycobacteriaceae</taxon>
        <taxon>Mycobacterium</taxon>
        <taxon>Mycobacterium tuberculosis complex</taxon>
    </lineage>
</organism>
<reference key="1">
    <citation type="journal article" date="1997" name="Biochem. Mol. Biol. Int.">
        <title>Cloning and sequencing of the secY gene homolog from Mycobacterium bovis BCG.</title>
        <authorList>
            <person name="Kim J.K."/>
            <person name="Kim J.H."/>
            <person name="Kim S.J."/>
            <person name="Bai G.H."/>
            <person name="Cho S.H."/>
            <person name="Kang S.W."/>
            <person name="Kim Y.S."/>
            <person name="Kim J.W."/>
            <person name="Lee Y.H."/>
            <person name="Lim J.S."/>
            <person name="Lee H.G."/>
            <person name="Choe I.S."/>
            <person name="Chung T.W."/>
            <person name="Park S.N."/>
            <person name="Ahn J.S."/>
            <person name="Choe Y.K."/>
        </authorList>
    </citation>
    <scope>NUCLEOTIDE SEQUENCE [GENOMIC DNA]</scope>
    <source>
        <strain>BCG</strain>
    </source>
</reference>
<reference key="2">
    <citation type="journal article" date="2003" name="Proc. Natl. Acad. Sci. U.S.A.">
        <title>The complete genome sequence of Mycobacterium bovis.</title>
        <authorList>
            <person name="Garnier T."/>
            <person name="Eiglmeier K."/>
            <person name="Camus J.-C."/>
            <person name="Medina N."/>
            <person name="Mansoor H."/>
            <person name="Pryor M."/>
            <person name="Duthoy S."/>
            <person name="Grondin S."/>
            <person name="Lacroix C."/>
            <person name="Monsempe C."/>
            <person name="Simon S."/>
            <person name="Harris B."/>
            <person name="Atkin R."/>
            <person name="Doggett J."/>
            <person name="Mayes R."/>
            <person name="Keating L."/>
            <person name="Wheeler P.R."/>
            <person name="Parkhill J."/>
            <person name="Barrell B.G."/>
            <person name="Cole S.T."/>
            <person name="Gordon S.V."/>
            <person name="Hewinson R.G."/>
        </authorList>
    </citation>
    <scope>NUCLEOTIDE SEQUENCE [LARGE SCALE GENOMIC DNA]</scope>
    <source>
        <strain>ATCC BAA-935 / AF2122/97</strain>
    </source>
</reference>
<reference key="3">
    <citation type="journal article" date="2017" name="Genome Announc.">
        <title>Updated reference genome sequence and annotation of Mycobacterium bovis AF2122/97.</title>
        <authorList>
            <person name="Malone K.M."/>
            <person name="Farrell D."/>
            <person name="Stuber T.P."/>
            <person name="Schubert O.T."/>
            <person name="Aebersold R."/>
            <person name="Robbe-Austerman S."/>
            <person name="Gordon S.V."/>
        </authorList>
    </citation>
    <scope>NUCLEOTIDE SEQUENCE [LARGE SCALE GENOMIC DNA]</scope>
    <scope>GENOME REANNOTATION</scope>
    <source>
        <strain>ATCC BAA-935 / AF2122/97</strain>
    </source>
</reference>
<comment type="function">
    <text evidence="1">The central subunit of the protein translocation channel SecYEG. Consists of two halves formed by TMs 1-5 and 6-10. These two domains form a lateral gate at the front which open onto the bilayer between TMs 2 and 7, and are clamped together by SecE at the back. The channel is closed by both a pore ring composed of hydrophobic SecY resides and a short helix (helix 2A) on the extracellular side of the membrane which forms a plug. The plug probably moves laterally to allow the channel to open. The ring and the pore may move independently.</text>
</comment>
<comment type="subunit">
    <text evidence="1">Component of the Sec protein translocase complex. Heterotrimer consisting of SecY, SecE and SecG subunits. The heterotrimers can form oligomers, although 1 heterotrimer is thought to be able to translocate proteins. Interacts with the ribosome. Interacts with SecDF, and other proteins may be involved. Interacts with SecA.</text>
</comment>
<comment type="subcellular location">
    <subcellularLocation>
        <location evidence="1">Cell membrane</location>
        <topology evidence="1">Multi-pass membrane protein</topology>
    </subcellularLocation>
</comment>
<comment type="similarity">
    <text evidence="1">Belongs to the SecY/SEC61-alpha family.</text>
</comment>
<evidence type="ECO:0000255" key="1">
    <source>
        <dbReference type="HAMAP-Rule" id="MF_01465"/>
    </source>
</evidence>
<gene>
    <name evidence="1" type="primary">secY</name>
    <name type="ordered locus">BQ2027_MB0753</name>
</gene>
<name>SECY_MYCBO</name>
<feature type="chain" id="PRO_0000131730" description="Protein translocase subunit SecY">
    <location>
        <begin position="1"/>
        <end position="441"/>
    </location>
</feature>
<feature type="transmembrane region" description="Helical" evidence="1">
    <location>
        <begin position="18"/>
        <end position="38"/>
    </location>
</feature>
<feature type="transmembrane region" description="Helical" evidence="1">
    <location>
        <begin position="78"/>
        <end position="98"/>
    </location>
</feature>
<feature type="transmembrane region" description="Helical" evidence="1">
    <location>
        <begin position="124"/>
        <end position="144"/>
    </location>
</feature>
<feature type="transmembrane region" description="Helical" evidence="1">
    <location>
        <begin position="157"/>
        <end position="177"/>
    </location>
</feature>
<feature type="transmembrane region" description="Helical" evidence="1">
    <location>
        <begin position="180"/>
        <end position="200"/>
    </location>
</feature>
<feature type="transmembrane region" description="Helical" evidence="1">
    <location>
        <begin position="215"/>
        <end position="235"/>
    </location>
</feature>
<feature type="transmembrane region" description="Helical" evidence="1">
    <location>
        <begin position="272"/>
        <end position="292"/>
    </location>
</feature>
<feature type="transmembrane region" description="Helical" evidence="1">
    <location>
        <begin position="318"/>
        <end position="338"/>
    </location>
</feature>
<feature type="transmembrane region" description="Helical" evidence="1">
    <location>
        <begin position="382"/>
        <end position="402"/>
    </location>
</feature>
<feature type="transmembrane region" description="Helical" evidence="1">
    <location>
        <begin position="403"/>
        <end position="423"/>
    </location>
</feature>
<accession>P0A5Z3</accession>
<accession>A0A1R3XYD8</accession>
<accession>P94926</accession>
<accession>X2BFT9</accession>
<keyword id="KW-1003">Cell membrane</keyword>
<keyword id="KW-0472">Membrane</keyword>
<keyword id="KW-0653">Protein transport</keyword>
<keyword id="KW-1185">Reference proteome</keyword>
<keyword id="KW-0811">Translocation</keyword>
<keyword id="KW-0812">Transmembrane</keyword>
<keyword id="KW-1133">Transmembrane helix</keyword>
<keyword id="KW-0813">Transport</keyword>